<evidence type="ECO:0000255" key="1">
    <source>
        <dbReference type="HAMAP-Rule" id="MF_00014"/>
    </source>
</evidence>
<comment type="function">
    <text evidence="1">An accessory protein needed during the final step in the assembly of 30S ribosomal subunit, possibly for assembly of the head region. Essential for efficient processing of 16S rRNA. May be needed both before and after RbfA during the maturation of 16S rRNA. It has affinity for free ribosomal 30S subunits but not for 70S ribosomes.</text>
</comment>
<comment type="subunit">
    <text evidence="1">Binds ribosomal protein uS19.</text>
</comment>
<comment type="subcellular location">
    <subcellularLocation>
        <location evidence="1">Cytoplasm</location>
    </subcellularLocation>
</comment>
<comment type="domain">
    <text evidence="1">The PRC barrel domain binds ribosomal protein uS19.</text>
</comment>
<comment type="similarity">
    <text evidence="1">Belongs to the RimM family.</text>
</comment>
<organism>
    <name type="scientific">Actinobacillus pleuropneumoniae serotype 5b (strain L20)</name>
    <dbReference type="NCBI Taxonomy" id="416269"/>
    <lineage>
        <taxon>Bacteria</taxon>
        <taxon>Pseudomonadati</taxon>
        <taxon>Pseudomonadota</taxon>
        <taxon>Gammaproteobacteria</taxon>
        <taxon>Pasteurellales</taxon>
        <taxon>Pasteurellaceae</taxon>
        <taxon>Actinobacillus</taxon>
    </lineage>
</organism>
<feature type="chain" id="PRO_1000001148" description="Ribosome maturation factor RimM">
    <location>
        <begin position="1"/>
        <end position="175"/>
    </location>
</feature>
<feature type="domain" description="PRC barrel" evidence="1">
    <location>
        <begin position="96"/>
        <end position="175"/>
    </location>
</feature>
<sequence>MSEQKIEVVGKLGSTYGIRGWLRLYSSTEETESIFDYQPWFLKIKGQWQPIELESWRYHNNDLIVKLKGSDDRESAQLLTNAEIGVDLSVFPELEEGDYYWHDLIGCQVINLEDYSMGVVTELMETGSNDVLVVRANSKDAFGKQERLIPFLYEQVVKRVDLATKTITVDWDAGF</sequence>
<proteinExistence type="inferred from homology"/>
<protein>
    <recommendedName>
        <fullName evidence="1">Ribosome maturation factor RimM</fullName>
    </recommendedName>
</protein>
<name>RIMM_ACTP2</name>
<accession>A3N385</accession>
<gene>
    <name evidence="1" type="primary">rimM</name>
    <name type="ordered locus">APL_1787</name>
</gene>
<dbReference type="EMBL" id="CP000569">
    <property type="protein sequence ID" value="ABN74871.1"/>
    <property type="molecule type" value="Genomic_DNA"/>
</dbReference>
<dbReference type="RefSeq" id="WP_005599336.1">
    <property type="nucleotide sequence ID" value="NC_009053.1"/>
</dbReference>
<dbReference type="SMR" id="A3N385"/>
<dbReference type="STRING" id="416269.APL_1787"/>
<dbReference type="EnsemblBacteria" id="ABN74871">
    <property type="protein sequence ID" value="ABN74871"/>
    <property type="gene ID" value="APL_1787"/>
</dbReference>
<dbReference type="GeneID" id="48600080"/>
<dbReference type="KEGG" id="apl:APL_1787"/>
<dbReference type="eggNOG" id="COG0806">
    <property type="taxonomic scope" value="Bacteria"/>
</dbReference>
<dbReference type="HOGENOM" id="CLU_077636_1_0_6"/>
<dbReference type="Proteomes" id="UP000001432">
    <property type="component" value="Chromosome"/>
</dbReference>
<dbReference type="GO" id="GO:0005737">
    <property type="term" value="C:cytoplasm"/>
    <property type="evidence" value="ECO:0007669"/>
    <property type="project" value="UniProtKB-SubCell"/>
</dbReference>
<dbReference type="GO" id="GO:0005840">
    <property type="term" value="C:ribosome"/>
    <property type="evidence" value="ECO:0007669"/>
    <property type="project" value="InterPro"/>
</dbReference>
<dbReference type="GO" id="GO:0043022">
    <property type="term" value="F:ribosome binding"/>
    <property type="evidence" value="ECO:0007669"/>
    <property type="project" value="InterPro"/>
</dbReference>
<dbReference type="GO" id="GO:0042274">
    <property type="term" value="P:ribosomal small subunit biogenesis"/>
    <property type="evidence" value="ECO:0007669"/>
    <property type="project" value="UniProtKB-UniRule"/>
</dbReference>
<dbReference type="GO" id="GO:0006364">
    <property type="term" value="P:rRNA processing"/>
    <property type="evidence" value="ECO:0007669"/>
    <property type="project" value="UniProtKB-UniRule"/>
</dbReference>
<dbReference type="Gene3D" id="2.30.30.240">
    <property type="entry name" value="PRC-barrel domain"/>
    <property type="match status" value="1"/>
</dbReference>
<dbReference type="Gene3D" id="2.40.30.60">
    <property type="entry name" value="RimM"/>
    <property type="match status" value="1"/>
</dbReference>
<dbReference type="HAMAP" id="MF_00014">
    <property type="entry name" value="Ribosome_mat_RimM"/>
    <property type="match status" value="1"/>
</dbReference>
<dbReference type="InterPro" id="IPR011033">
    <property type="entry name" value="PRC_barrel-like_sf"/>
</dbReference>
<dbReference type="InterPro" id="IPR056792">
    <property type="entry name" value="PRC_RimM"/>
</dbReference>
<dbReference type="InterPro" id="IPR011961">
    <property type="entry name" value="RimM"/>
</dbReference>
<dbReference type="InterPro" id="IPR002676">
    <property type="entry name" value="RimM_N"/>
</dbReference>
<dbReference type="InterPro" id="IPR036976">
    <property type="entry name" value="RimM_N_sf"/>
</dbReference>
<dbReference type="InterPro" id="IPR009000">
    <property type="entry name" value="Transl_B-barrel_sf"/>
</dbReference>
<dbReference type="NCBIfam" id="TIGR02273">
    <property type="entry name" value="16S_RimM"/>
    <property type="match status" value="1"/>
</dbReference>
<dbReference type="PANTHER" id="PTHR33692">
    <property type="entry name" value="RIBOSOME MATURATION FACTOR RIMM"/>
    <property type="match status" value="1"/>
</dbReference>
<dbReference type="PANTHER" id="PTHR33692:SF1">
    <property type="entry name" value="RIBOSOME MATURATION FACTOR RIMM"/>
    <property type="match status" value="1"/>
</dbReference>
<dbReference type="Pfam" id="PF24986">
    <property type="entry name" value="PRC_RimM"/>
    <property type="match status" value="1"/>
</dbReference>
<dbReference type="Pfam" id="PF01782">
    <property type="entry name" value="RimM"/>
    <property type="match status" value="1"/>
</dbReference>
<dbReference type="SUPFAM" id="SSF50346">
    <property type="entry name" value="PRC-barrel domain"/>
    <property type="match status" value="1"/>
</dbReference>
<dbReference type="SUPFAM" id="SSF50447">
    <property type="entry name" value="Translation proteins"/>
    <property type="match status" value="1"/>
</dbReference>
<reference key="1">
    <citation type="journal article" date="2008" name="J. Bacteriol.">
        <title>The complete genome sequence of Actinobacillus pleuropneumoniae L20 (serotype 5b).</title>
        <authorList>
            <person name="Foote S.J."/>
            <person name="Bosse J.T."/>
            <person name="Bouevitch A.B."/>
            <person name="Langford P.R."/>
            <person name="Young N.M."/>
            <person name="Nash J.H.E."/>
        </authorList>
    </citation>
    <scope>NUCLEOTIDE SEQUENCE [LARGE SCALE GENOMIC DNA]</scope>
    <source>
        <strain>L20</strain>
    </source>
</reference>
<keyword id="KW-0143">Chaperone</keyword>
<keyword id="KW-0963">Cytoplasm</keyword>
<keyword id="KW-1185">Reference proteome</keyword>
<keyword id="KW-0690">Ribosome biogenesis</keyword>
<keyword id="KW-0698">rRNA processing</keyword>